<name>KCY_MYCTO</name>
<protein>
    <recommendedName>
        <fullName evidence="2">Cytidylate kinase</fullName>
        <shortName evidence="2">CK</shortName>
        <ecNumber evidence="2">2.7.4.25</ecNumber>
    </recommendedName>
    <alternativeName>
        <fullName evidence="2">Cytidine monophosphate kinase</fullName>
        <shortName evidence="2">CMP kinase</shortName>
    </alternativeName>
</protein>
<gene>
    <name evidence="2" type="primary">cmk</name>
    <name type="ordered locus">MT1752</name>
</gene>
<accession>P9WPA8</accession>
<accession>L0TAE5</accession>
<accession>O33211</accession>
<accession>P63803</accession>
<comment type="catalytic activity">
    <reaction evidence="2">
        <text>CMP + ATP = CDP + ADP</text>
        <dbReference type="Rhea" id="RHEA:11600"/>
        <dbReference type="ChEBI" id="CHEBI:30616"/>
        <dbReference type="ChEBI" id="CHEBI:58069"/>
        <dbReference type="ChEBI" id="CHEBI:60377"/>
        <dbReference type="ChEBI" id="CHEBI:456216"/>
        <dbReference type="EC" id="2.7.4.25"/>
    </reaction>
</comment>
<comment type="catalytic activity">
    <reaction evidence="2">
        <text>dCMP + ATP = dCDP + ADP</text>
        <dbReference type="Rhea" id="RHEA:25094"/>
        <dbReference type="ChEBI" id="CHEBI:30616"/>
        <dbReference type="ChEBI" id="CHEBI:57566"/>
        <dbReference type="ChEBI" id="CHEBI:58593"/>
        <dbReference type="ChEBI" id="CHEBI:456216"/>
        <dbReference type="EC" id="2.7.4.25"/>
    </reaction>
</comment>
<comment type="subunit">
    <text evidence="1">Monomer.</text>
</comment>
<comment type="subcellular location">
    <subcellularLocation>
        <location evidence="2">Cytoplasm</location>
    </subcellularLocation>
</comment>
<comment type="similarity">
    <text evidence="2">Belongs to the cytidylate kinase family. Type 1 subfamily.</text>
</comment>
<dbReference type="EC" id="2.7.4.25" evidence="2"/>
<dbReference type="EMBL" id="AE000516">
    <property type="protein sequence ID" value="AAK46023.1"/>
    <property type="molecule type" value="Genomic_DNA"/>
</dbReference>
<dbReference type="PIR" id="G70504">
    <property type="entry name" value="G70504"/>
</dbReference>
<dbReference type="RefSeq" id="WP_003408441.1">
    <property type="nucleotide sequence ID" value="NZ_KK341227.1"/>
</dbReference>
<dbReference type="SMR" id="P9WPA8"/>
<dbReference type="GeneID" id="45425683"/>
<dbReference type="KEGG" id="mtc:MT1752"/>
<dbReference type="PATRIC" id="fig|83331.31.peg.1881"/>
<dbReference type="HOGENOM" id="CLU_079959_0_0_11"/>
<dbReference type="Proteomes" id="UP000001020">
    <property type="component" value="Chromosome"/>
</dbReference>
<dbReference type="GO" id="GO:0005829">
    <property type="term" value="C:cytosol"/>
    <property type="evidence" value="ECO:0007669"/>
    <property type="project" value="TreeGrafter"/>
</dbReference>
<dbReference type="GO" id="GO:0005524">
    <property type="term" value="F:ATP binding"/>
    <property type="evidence" value="ECO:0007669"/>
    <property type="project" value="UniProtKB-UniRule"/>
</dbReference>
<dbReference type="GO" id="GO:0036430">
    <property type="term" value="F:CMP kinase activity"/>
    <property type="evidence" value="ECO:0007669"/>
    <property type="project" value="RHEA"/>
</dbReference>
<dbReference type="GO" id="GO:0036431">
    <property type="term" value="F:dCMP kinase activity"/>
    <property type="evidence" value="ECO:0007669"/>
    <property type="project" value="RHEA"/>
</dbReference>
<dbReference type="GO" id="GO:0015949">
    <property type="term" value="P:nucleobase-containing small molecule interconversion"/>
    <property type="evidence" value="ECO:0007669"/>
    <property type="project" value="TreeGrafter"/>
</dbReference>
<dbReference type="GO" id="GO:0006220">
    <property type="term" value="P:pyrimidine nucleotide metabolic process"/>
    <property type="evidence" value="ECO:0007669"/>
    <property type="project" value="UniProtKB-UniRule"/>
</dbReference>
<dbReference type="CDD" id="cd02020">
    <property type="entry name" value="CMPK"/>
    <property type="match status" value="1"/>
</dbReference>
<dbReference type="Gene3D" id="3.40.50.300">
    <property type="entry name" value="P-loop containing nucleotide triphosphate hydrolases"/>
    <property type="match status" value="1"/>
</dbReference>
<dbReference type="HAMAP" id="MF_00238">
    <property type="entry name" value="Cytidyl_kinase_type1"/>
    <property type="match status" value="1"/>
</dbReference>
<dbReference type="InterPro" id="IPR003136">
    <property type="entry name" value="Cytidylate_kin"/>
</dbReference>
<dbReference type="InterPro" id="IPR011994">
    <property type="entry name" value="Cytidylate_kinase_dom"/>
</dbReference>
<dbReference type="InterPro" id="IPR027417">
    <property type="entry name" value="P-loop_NTPase"/>
</dbReference>
<dbReference type="NCBIfam" id="TIGR00017">
    <property type="entry name" value="cmk"/>
    <property type="match status" value="1"/>
</dbReference>
<dbReference type="PANTHER" id="PTHR21299:SF2">
    <property type="entry name" value="CYTIDYLATE KINASE"/>
    <property type="match status" value="1"/>
</dbReference>
<dbReference type="PANTHER" id="PTHR21299">
    <property type="entry name" value="CYTIDYLATE KINASE/PANTOATE-BETA-ALANINE LIGASE"/>
    <property type="match status" value="1"/>
</dbReference>
<dbReference type="Pfam" id="PF02224">
    <property type="entry name" value="Cytidylate_kin"/>
    <property type="match status" value="1"/>
</dbReference>
<dbReference type="SUPFAM" id="SSF52540">
    <property type="entry name" value="P-loop containing nucleoside triphosphate hydrolases"/>
    <property type="match status" value="1"/>
</dbReference>
<sequence length="230" mass="24177">MSRLSAAVVAIDGPAGTGKSSVSRRLARELGARFLDTGAMYRIVTLAVLRAGADPSDIAAVETIASTVQMSLGYDPDGDSCYLAGEDVSVEIRGDAVTRAVSAVSSVPAVRTRLVELQRTMAEGPGSIVVEGRDIGTVVFPDAPVKIFLTASAETRARRRNAQNVAAGLADDYDGVLADVRRRDHLDSTRAVSPLQAAGDAVIVDTSDMTEAEVVAHLLELVTRRSEAVR</sequence>
<proteinExistence type="inferred from homology"/>
<keyword id="KW-0067">ATP-binding</keyword>
<keyword id="KW-0963">Cytoplasm</keyword>
<keyword id="KW-0418">Kinase</keyword>
<keyword id="KW-0547">Nucleotide-binding</keyword>
<keyword id="KW-1185">Reference proteome</keyword>
<keyword id="KW-0808">Transferase</keyword>
<feature type="initiator methionine" description="Removed" evidence="1">
    <location>
        <position position="1"/>
    </location>
</feature>
<feature type="chain" id="PRO_0000426984" description="Cytidylate kinase">
    <location>
        <begin position="2"/>
        <end position="230"/>
    </location>
</feature>
<feature type="binding site" evidence="2">
    <location>
        <begin position="13"/>
        <end position="21"/>
    </location>
    <ligand>
        <name>ATP</name>
        <dbReference type="ChEBI" id="CHEBI:30616"/>
    </ligand>
</feature>
<organism>
    <name type="scientific">Mycobacterium tuberculosis (strain CDC 1551 / Oshkosh)</name>
    <dbReference type="NCBI Taxonomy" id="83331"/>
    <lineage>
        <taxon>Bacteria</taxon>
        <taxon>Bacillati</taxon>
        <taxon>Actinomycetota</taxon>
        <taxon>Actinomycetes</taxon>
        <taxon>Mycobacteriales</taxon>
        <taxon>Mycobacteriaceae</taxon>
        <taxon>Mycobacterium</taxon>
        <taxon>Mycobacterium tuberculosis complex</taxon>
    </lineage>
</organism>
<evidence type="ECO:0000250" key="1"/>
<evidence type="ECO:0000255" key="2">
    <source>
        <dbReference type="HAMAP-Rule" id="MF_00238"/>
    </source>
</evidence>
<reference key="1">
    <citation type="journal article" date="2002" name="J. Bacteriol.">
        <title>Whole-genome comparison of Mycobacterium tuberculosis clinical and laboratory strains.</title>
        <authorList>
            <person name="Fleischmann R.D."/>
            <person name="Alland D."/>
            <person name="Eisen J.A."/>
            <person name="Carpenter L."/>
            <person name="White O."/>
            <person name="Peterson J.D."/>
            <person name="DeBoy R.T."/>
            <person name="Dodson R.J."/>
            <person name="Gwinn M.L."/>
            <person name="Haft D.H."/>
            <person name="Hickey E.K."/>
            <person name="Kolonay J.F."/>
            <person name="Nelson W.C."/>
            <person name="Umayam L.A."/>
            <person name="Ermolaeva M.D."/>
            <person name="Salzberg S.L."/>
            <person name="Delcher A."/>
            <person name="Utterback T.R."/>
            <person name="Weidman J.F."/>
            <person name="Khouri H.M."/>
            <person name="Gill J."/>
            <person name="Mikula A."/>
            <person name="Bishai W."/>
            <person name="Jacobs W.R. Jr."/>
            <person name="Venter J.C."/>
            <person name="Fraser C.M."/>
        </authorList>
    </citation>
    <scope>NUCLEOTIDE SEQUENCE [LARGE SCALE GENOMIC DNA]</scope>
    <source>
        <strain>CDC 1551 / Oshkosh</strain>
    </source>
</reference>